<reference evidence="3" key="1">
    <citation type="journal article" date="1998" name="Science">
        <title>Genome sequence of the nematode C. elegans: a platform for investigating biology.</title>
        <authorList>
            <consortium name="The C. elegans sequencing consortium"/>
        </authorList>
    </citation>
    <scope>NUCLEOTIDE SEQUENCE [LARGE SCALE GENOMIC DNA]</scope>
    <source>
        <strain>Bristol N2</strain>
    </source>
</reference>
<keyword id="KW-0496">Mitochondrion</keyword>
<keyword id="KW-1185">Reference proteome</keyword>
<keyword id="KW-0809">Transit peptide</keyword>
<organism>
    <name type="scientific">Caenorhabditis elegans</name>
    <dbReference type="NCBI Taxonomy" id="6239"/>
    <lineage>
        <taxon>Eukaryota</taxon>
        <taxon>Metazoa</taxon>
        <taxon>Ecdysozoa</taxon>
        <taxon>Nematoda</taxon>
        <taxon>Chromadorea</taxon>
        <taxon>Rhabditida</taxon>
        <taxon>Rhabditina</taxon>
        <taxon>Rhabditomorpha</taxon>
        <taxon>Rhabditoidea</taxon>
        <taxon>Rhabditidae</taxon>
        <taxon>Peloderinae</taxon>
        <taxon>Caenorhabditis</taxon>
    </lineage>
</organism>
<comment type="subcellular location">
    <subcellularLocation>
        <location evidence="1">Mitochondrion</location>
    </subcellularLocation>
</comment>
<comment type="similarity">
    <text evidence="2">Belongs to the BtpA family.</text>
</comment>
<sequence length="277" mass="29873">MVQRVVVSKLLNSSRPLVFGMIHVPALPGTPSNTLPMSAILKKVRKEADVYFKNGVDGVIVENMHDVPYVKPPASPEIVSSMALASDQLVKSRDAHHPAALTGIQILAAANREALAVAYTTGMDFIRAEGFVYSHVADEGWIDGCAGGLLRYRSSLKAENIAIFTDIKKKHSAHSVTSDVSIHEMAKDAKFNCADGVIVTGSATGSAASLEEMIQVMKVQEFPVLIGSGINGKNAREFVKAHGFIVGSDFKIGGEWKNDLDSGRISKFMKHVNTLKR</sequence>
<protein>
    <recommendedName>
        <fullName>Uncharacterized protein F13E9.13, mitochondrial</fullName>
    </recommendedName>
</protein>
<accession>Q1NZ26</accession>
<evidence type="ECO:0000255" key="1"/>
<evidence type="ECO:0000305" key="2"/>
<evidence type="ECO:0000312" key="3">
    <source>
        <dbReference type="EMBL" id="CAJ90501.1"/>
    </source>
</evidence>
<feature type="transit peptide" description="Mitochondrion" evidence="1">
    <location>
        <begin position="1"/>
        <end status="unknown"/>
    </location>
</feature>
<feature type="chain" id="PRO_0000261605" description="Uncharacterized protein F13E9.13, mitochondrial">
    <location>
        <begin status="unknown"/>
        <end position="277"/>
    </location>
</feature>
<gene>
    <name type="ORF">F13E9.13</name>
</gene>
<proteinExistence type="inferred from homology"/>
<dbReference type="EMBL" id="Z69383">
    <property type="protein sequence ID" value="CAJ90501.1"/>
    <property type="molecule type" value="Genomic_DNA"/>
</dbReference>
<dbReference type="RefSeq" id="NP_001040934.1">
    <property type="nucleotide sequence ID" value="NM_001047469.4"/>
</dbReference>
<dbReference type="FunCoup" id="Q1NZ26">
    <property type="interactions" value="2"/>
</dbReference>
<dbReference type="PaxDb" id="6239-F13E9.13"/>
<dbReference type="PeptideAtlas" id="Q1NZ26"/>
<dbReference type="EnsemblMetazoa" id="F13E9.13.1">
    <property type="protein sequence ID" value="F13E9.13.1"/>
    <property type="gene ID" value="WBGene00044797"/>
</dbReference>
<dbReference type="GeneID" id="4363067"/>
<dbReference type="KEGG" id="cel:CELE_F13E9.13"/>
<dbReference type="UCSC" id="F13E9.13">
    <property type="organism name" value="c. elegans"/>
</dbReference>
<dbReference type="AGR" id="WB:WBGene00044797"/>
<dbReference type="CTD" id="4363067"/>
<dbReference type="WormBase" id="F13E9.13">
    <property type="protein sequence ID" value="CE40036"/>
    <property type="gene ID" value="WBGene00044797"/>
</dbReference>
<dbReference type="eggNOG" id="ENOG502QUBS">
    <property type="taxonomic scope" value="Eukaryota"/>
</dbReference>
<dbReference type="GeneTree" id="ENSGT00390000006020"/>
<dbReference type="HOGENOM" id="CLU_075239_1_0_1"/>
<dbReference type="InParanoid" id="Q1NZ26"/>
<dbReference type="OMA" id="ENFFDAP"/>
<dbReference type="OrthoDB" id="10045006at2759"/>
<dbReference type="PhylomeDB" id="Q1NZ26"/>
<dbReference type="PRO" id="PR:Q1NZ26"/>
<dbReference type="Proteomes" id="UP000001940">
    <property type="component" value="Chromosome IV"/>
</dbReference>
<dbReference type="Bgee" id="WBGene00044797">
    <property type="expression patterns" value="Expressed in embryo and 3 other cell types or tissues"/>
</dbReference>
<dbReference type="GO" id="GO:0005739">
    <property type="term" value="C:mitochondrion"/>
    <property type="evidence" value="ECO:0007669"/>
    <property type="project" value="UniProtKB-SubCell"/>
</dbReference>
<dbReference type="InterPro" id="IPR005137">
    <property type="entry name" value="BtpA"/>
</dbReference>
<dbReference type="InterPro" id="IPR011060">
    <property type="entry name" value="RibuloseP-bd_barrel"/>
</dbReference>
<dbReference type="NCBIfam" id="TIGR00259">
    <property type="entry name" value="thylakoid_BtpA"/>
    <property type="match status" value="1"/>
</dbReference>
<dbReference type="PANTHER" id="PTHR21381:SF3">
    <property type="entry name" value="SGC REGION PROTEIN SGCQ-RELATED"/>
    <property type="match status" value="1"/>
</dbReference>
<dbReference type="PANTHER" id="PTHR21381">
    <property type="entry name" value="ZGC:162297"/>
    <property type="match status" value="1"/>
</dbReference>
<dbReference type="Pfam" id="PF03437">
    <property type="entry name" value="BtpA"/>
    <property type="match status" value="1"/>
</dbReference>
<dbReference type="PIRSF" id="PIRSF005956">
    <property type="entry name" value="BtpA"/>
    <property type="match status" value="1"/>
</dbReference>
<dbReference type="SUPFAM" id="SSF51366">
    <property type="entry name" value="Ribulose-phoshate binding barrel"/>
    <property type="match status" value="1"/>
</dbReference>
<name>YSMU_CAEEL</name>